<organism>
    <name type="scientific">Macaca fascicularis</name>
    <name type="common">Crab-eating macaque</name>
    <name type="synonym">Cynomolgus monkey</name>
    <dbReference type="NCBI Taxonomy" id="9541"/>
    <lineage>
        <taxon>Eukaryota</taxon>
        <taxon>Metazoa</taxon>
        <taxon>Chordata</taxon>
        <taxon>Craniata</taxon>
        <taxon>Vertebrata</taxon>
        <taxon>Euteleostomi</taxon>
        <taxon>Mammalia</taxon>
        <taxon>Eutheria</taxon>
        <taxon>Euarchontoglires</taxon>
        <taxon>Primates</taxon>
        <taxon>Haplorrhini</taxon>
        <taxon>Catarrhini</taxon>
        <taxon>Cercopithecidae</taxon>
        <taxon>Cercopithecinae</taxon>
        <taxon>Macaca</taxon>
    </lineage>
</organism>
<dbReference type="EMBL" id="AB093681">
    <property type="protein sequence ID" value="BAC21655.1"/>
    <property type="molecule type" value="mRNA"/>
</dbReference>
<dbReference type="SMR" id="Q8HXB8"/>
<dbReference type="STRING" id="9541.ENSMFAP00000014601"/>
<dbReference type="eggNOG" id="KOG3504">
    <property type="taxonomic scope" value="Eukaryota"/>
</dbReference>
<dbReference type="OrthoDB" id="996720at2759"/>
<dbReference type="Proteomes" id="UP000233100">
    <property type="component" value="Unplaced"/>
</dbReference>
<dbReference type="GO" id="GO:0022625">
    <property type="term" value="C:cytosolic large ribosomal subunit"/>
    <property type="evidence" value="ECO:0007669"/>
    <property type="project" value="TreeGrafter"/>
</dbReference>
<dbReference type="GO" id="GO:0003735">
    <property type="term" value="F:structural constituent of ribosome"/>
    <property type="evidence" value="ECO:0007669"/>
    <property type="project" value="InterPro"/>
</dbReference>
<dbReference type="GO" id="GO:0002181">
    <property type="term" value="P:cytoplasmic translation"/>
    <property type="evidence" value="ECO:0007669"/>
    <property type="project" value="TreeGrafter"/>
</dbReference>
<dbReference type="Gene3D" id="6.10.140.1730">
    <property type="match status" value="1"/>
</dbReference>
<dbReference type="InterPro" id="IPR002673">
    <property type="entry name" value="Ribosomal_eL29"/>
</dbReference>
<dbReference type="PANTHER" id="PTHR12884">
    <property type="entry name" value="60S RIBOSOMAL PROTEIN L29"/>
    <property type="match status" value="1"/>
</dbReference>
<dbReference type="PANTHER" id="PTHR12884:SF18">
    <property type="entry name" value="60S RIBOSOMAL PROTEIN L29"/>
    <property type="match status" value="1"/>
</dbReference>
<dbReference type="Pfam" id="PF01779">
    <property type="entry name" value="Ribosomal_L29e"/>
    <property type="match status" value="1"/>
</dbReference>
<sequence>MAKSKNHTTHNQSRKWHRNGIKKPRSQRYESLKGVDPKFLRNMRFAKKHNKKGLRKMQTNNAKAMSARAEAVKALVKPKEVKPKIPKGVSRKLDRLAYIAHPKLGKRARARIAKGLRLCRPKAKAKAKDQTKAQAAAPASIPAQAPKGAQATTKATE</sequence>
<feature type="chain" id="PRO_0000219135" description="Large ribosomal subunit protein eL29">
    <location>
        <begin position="1"/>
        <end position="157"/>
    </location>
</feature>
<feature type="region of interest" description="Disordered" evidence="2">
    <location>
        <begin position="1"/>
        <end position="32"/>
    </location>
</feature>
<feature type="region of interest" description="Disordered" evidence="2">
    <location>
        <begin position="121"/>
        <end position="157"/>
    </location>
</feature>
<feature type="compositionally biased region" description="Basic residues" evidence="2">
    <location>
        <begin position="1"/>
        <end position="26"/>
    </location>
</feature>
<feature type="compositionally biased region" description="Low complexity" evidence="2">
    <location>
        <begin position="132"/>
        <end position="147"/>
    </location>
</feature>
<feature type="modified residue" description="N6-methyllysine" evidence="1">
    <location>
        <position position="5"/>
    </location>
</feature>
<feature type="modified residue" description="Phosphoserine" evidence="1">
    <location>
        <position position="31"/>
    </location>
</feature>
<feature type="modified residue" description="N6-acetyllysine" evidence="1">
    <location>
        <position position="33"/>
    </location>
</feature>
<feature type="modified residue" description="Phosphoserine" evidence="1">
    <location>
        <position position="140"/>
    </location>
</feature>
<reference key="1">
    <citation type="journal article" date="2001" name="Gene">
        <title>Assignment of 118 novel cDNAs of cynomolgus monkey brain to human chromosomes.</title>
        <authorList>
            <person name="Osada N."/>
            <person name="Hida M."/>
            <person name="Kususda J."/>
            <person name="Tanuma R."/>
            <person name="Iseki K."/>
            <person name="Hirata M."/>
            <person name="Suto Y."/>
            <person name="Hirai M."/>
            <person name="Terao K."/>
            <person name="Suzuki Y."/>
            <person name="Sugano S."/>
            <person name="Hashimoto K."/>
        </authorList>
    </citation>
    <scope>NUCLEOTIDE SEQUENCE [LARGE SCALE MRNA]</scope>
    <source>
        <tissue>Brain cortex</tissue>
    </source>
</reference>
<reference key="2">
    <citation type="journal article" date="2001" name="Gene">
        <authorList>
            <person name="Osada N."/>
            <person name="Hida M."/>
            <person name="Kusuda J."/>
            <person name="Tanuma R."/>
            <person name="Iseki K."/>
            <person name="Hirata M."/>
            <person name="Suto Y."/>
            <person name="Hirai M."/>
            <person name="Terao K."/>
            <person name="Suzuki Y."/>
            <person name="Sugano S."/>
            <person name="Hashimoto K."/>
            <person name="Kususda J."/>
        </authorList>
    </citation>
    <scope>ERRATUM OF PUBMED:11574149</scope>
</reference>
<accession>Q8HXB8</accession>
<evidence type="ECO:0000250" key="1">
    <source>
        <dbReference type="UniProtKB" id="P47914"/>
    </source>
</evidence>
<evidence type="ECO:0000256" key="2">
    <source>
        <dbReference type="SAM" id="MobiDB-lite"/>
    </source>
</evidence>
<evidence type="ECO:0000305" key="3"/>
<name>RL29_MACFA</name>
<proteinExistence type="evidence at transcript level"/>
<protein>
    <recommendedName>
        <fullName evidence="3">Large ribosomal subunit protein eL29</fullName>
    </recommendedName>
    <alternativeName>
        <fullName>60S ribosomal protein L29</fullName>
    </alternativeName>
</protein>
<gene>
    <name type="primary">RPL29</name>
    <name type="ORF">QccE-11892</name>
</gene>
<keyword id="KW-0007">Acetylation</keyword>
<keyword id="KW-0963">Cytoplasm</keyword>
<keyword id="KW-0488">Methylation</keyword>
<keyword id="KW-0597">Phosphoprotein</keyword>
<keyword id="KW-1185">Reference proteome</keyword>
<keyword id="KW-0677">Repeat</keyword>
<keyword id="KW-0687">Ribonucleoprotein</keyword>
<keyword id="KW-0689">Ribosomal protein</keyword>
<comment type="function">
    <text evidence="1">Component of the large ribosomal subunit. The ribosome is a large ribonucleoprotein complex responsible for the synthesis of proteins in the cell.</text>
</comment>
<comment type="subunit">
    <text evidence="1">Component of the large ribosomal subunit.</text>
</comment>
<comment type="subcellular location">
    <subcellularLocation>
        <location evidence="1">Cytoplasm</location>
    </subcellularLocation>
</comment>
<comment type="similarity">
    <text evidence="3">Belongs to the eukaryotic ribosomal protein eL29 family.</text>
</comment>